<keyword id="KW-0028">Amino-acid biosynthesis</keyword>
<keyword id="KW-0055">Arginine biosynthesis</keyword>
<keyword id="KW-0067">ATP-binding</keyword>
<keyword id="KW-0963">Cytoplasm</keyword>
<keyword id="KW-0418">Kinase</keyword>
<keyword id="KW-0457">Lysine biosynthesis</keyword>
<keyword id="KW-0547">Nucleotide-binding</keyword>
<keyword id="KW-1185">Reference proteome</keyword>
<keyword id="KW-0808">Transferase</keyword>
<sequence length="249" mass="27398">MRVVKIGGSVISMLENLWRENGISEILGNSVIVHGGSRHVDELSRKMGVKIEKLTSPSGVTFRRTTKEVLKVYVAAMIRANKEIVEFLRNQGINAIGLTGLDRELIIGERKKLIKAVINGRVVAIRDDYSGVIKKVNTQILREYLKIGTPVIASIAYDPIENTPLNVDGDKVAYHVALAMDAKELYFLSDTAFMAGGKVVSELPADEIEKYLIFAKGGMKKKLLMAKEAINSGIKNVVIEGLNGRTVIY</sequence>
<proteinExistence type="inferred from homology"/>
<dbReference type="EC" id="2.7.2.17" evidence="1"/>
<dbReference type="EC" id="2.7.2.19" evidence="1"/>
<dbReference type="EMBL" id="AE009950">
    <property type="protein sequence ID" value="AAL81808.1"/>
    <property type="molecule type" value="Genomic_DNA"/>
</dbReference>
<dbReference type="RefSeq" id="WP_011012830.1">
    <property type="nucleotide sequence ID" value="NZ_CP023154.1"/>
</dbReference>
<dbReference type="SMR" id="Q8U0B5"/>
<dbReference type="STRING" id="186497.PF1684"/>
<dbReference type="PaxDb" id="186497-PF1684"/>
<dbReference type="KEGG" id="pfu:PF1684"/>
<dbReference type="PATRIC" id="fig|186497.12.peg.1752"/>
<dbReference type="eggNOG" id="arCOG00862">
    <property type="taxonomic scope" value="Archaea"/>
</dbReference>
<dbReference type="HOGENOM" id="CLU_053680_2_0_2"/>
<dbReference type="OrthoDB" id="6816at2157"/>
<dbReference type="PhylomeDB" id="Q8U0B5"/>
<dbReference type="UniPathway" id="UPA00033">
    <property type="reaction ID" value="UER00036"/>
</dbReference>
<dbReference type="UniPathway" id="UPA00068"/>
<dbReference type="Proteomes" id="UP000001013">
    <property type="component" value="Chromosome"/>
</dbReference>
<dbReference type="GO" id="GO:0005737">
    <property type="term" value="C:cytoplasm"/>
    <property type="evidence" value="ECO:0007669"/>
    <property type="project" value="UniProtKB-SubCell"/>
</dbReference>
<dbReference type="GO" id="GO:0003991">
    <property type="term" value="F:acetylglutamate kinase activity"/>
    <property type="evidence" value="ECO:0007669"/>
    <property type="project" value="TreeGrafter"/>
</dbReference>
<dbReference type="GO" id="GO:0005524">
    <property type="term" value="F:ATP binding"/>
    <property type="evidence" value="ECO:0007669"/>
    <property type="project" value="UniProtKB-KW"/>
</dbReference>
<dbReference type="GO" id="GO:0043744">
    <property type="term" value="F:N2-acetyl-L-aminoadipate kinase activity"/>
    <property type="evidence" value="ECO:0007669"/>
    <property type="project" value="RHEA"/>
</dbReference>
<dbReference type="GO" id="GO:0042450">
    <property type="term" value="P:arginine biosynthetic process via ornithine"/>
    <property type="evidence" value="ECO:0007669"/>
    <property type="project" value="UniProtKB-UniRule"/>
</dbReference>
<dbReference type="GO" id="GO:0006526">
    <property type="term" value="P:L-arginine biosynthetic process"/>
    <property type="evidence" value="ECO:0007669"/>
    <property type="project" value="UniProtKB-UniPathway"/>
</dbReference>
<dbReference type="GO" id="GO:0019878">
    <property type="term" value="P:lysine biosynthetic process via aminoadipic acid"/>
    <property type="evidence" value="ECO:0007669"/>
    <property type="project" value="UniProtKB-UniRule"/>
</dbReference>
<dbReference type="Gene3D" id="3.40.1160.10">
    <property type="entry name" value="Acetylglutamate kinase-like"/>
    <property type="match status" value="1"/>
</dbReference>
<dbReference type="HAMAP" id="MF_02082">
    <property type="entry name" value="LysZ"/>
    <property type="match status" value="1"/>
</dbReference>
<dbReference type="InterPro" id="IPR036393">
    <property type="entry name" value="AceGlu_kinase-like_sf"/>
</dbReference>
<dbReference type="InterPro" id="IPR004662">
    <property type="entry name" value="AcgluKinase_fam"/>
</dbReference>
<dbReference type="InterPro" id="IPR001048">
    <property type="entry name" value="Asp/Glu/Uridylate_kinase"/>
</dbReference>
<dbReference type="InterPro" id="IPR037529">
    <property type="entry name" value="LysZ"/>
</dbReference>
<dbReference type="NCBIfam" id="TIGR00761">
    <property type="entry name" value="argB"/>
    <property type="match status" value="1"/>
</dbReference>
<dbReference type="NCBIfam" id="NF010660">
    <property type="entry name" value="PRK14058.1-2"/>
    <property type="match status" value="1"/>
</dbReference>
<dbReference type="PANTHER" id="PTHR23342">
    <property type="entry name" value="N-ACETYLGLUTAMATE SYNTHASE"/>
    <property type="match status" value="1"/>
</dbReference>
<dbReference type="PANTHER" id="PTHR23342:SF0">
    <property type="entry name" value="N-ACETYLGLUTAMATE SYNTHASE, MITOCHONDRIAL"/>
    <property type="match status" value="1"/>
</dbReference>
<dbReference type="Pfam" id="PF00696">
    <property type="entry name" value="AA_kinase"/>
    <property type="match status" value="1"/>
</dbReference>
<dbReference type="PIRSF" id="PIRSF000728">
    <property type="entry name" value="NAGK"/>
    <property type="match status" value="1"/>
</dbReference>
<dbReference type="SUPFAM" id="SSF53633">
    <property type="entry name" value="Carbamate kinase-like"/>
    <property type="match status" value="1"/>
</dbReference>
<evidence type="ECO:0000255" key="1">
    <source>
        <dbReference type="HAMAP-Rule" id="MF_02082"/>
    </source>
</evidence>
<organism>
    <name type="scientific">Pyrococcus furiosus (strain ATCC 43587 / DSM 3638 / JCM 8422 / Vc1)</name>
    <dbReference type="NCBI Taxonomy" id="186497"/>
    <lineage>
        <taxon>Archaea</taxon>
        <taxon>Methanobacteriati</taxon>
        <taxon>Methanobacteriota</taxon>
        <taxon>Thermococci</taxon>
        <taxon>Thermococcales</taxon>
        <taxon>Thermococcaceae</taxon>
        <taxon>Pyrococcus</taxon>
    </lineage>
</organism>
<feature type="chain" id="PRO_0000112701" description="Putative [LysW]-aminoadipate/[LysW]-glutamate kinase">
    <location>
        <begin position="1"/>
        <end position="249"/>
    </location>
</feature>
<feature type="binding site" evidence="1">
    <location>
        <position position="63"/>
    </location>
    <ligand>
        <name>substrate</name>
    </ligand>
</feature>
<feature type="binding site" evidence="1">
    <location>
        <position position="166"/>
    </location>
    <ligand>
        <name>substrate</name>
    </ligand>
</feature>
<feature type="site" description="Transition state stabilizer" evidence="1">
    <location>
        <position position="5"/>
    </location>
</feature>
<feature type="site" description="Transition state stabilizer" evidence="1">
    <location>
        <position position="222"/>
    </location>
</feature>
<comment type="function">
    <text evidence="1">Involved in both the arginine and lysine biosynthetic pathways. Phosphorylates the LysW-bound precursors glutamate (for arginine biosynthesis), respectively alpha-aminoadipate (for lysine biosynthesis).</text>
</comment>
<comment type="catalytic activity">
    <reaction evidence="1">
        <text>[amino-group carrier protein]-C-terminal-N-(1,4-dicarboxybutan-1-yl)-L-glutamine + ATP = [amino-group carrier protein]-C-terminal-N-(1-carboxy-5-phosphooxy-5-oxopentan-1-yl)-L-glutamine + ADP</text>
        <dbReference type="Rhea" id="RHEA:41944"/>
        <dbReference type="Rhea" id="RHEA-COMP:9694"/>
        <dbReference type="Rhea" id="RHEA-COMP:9712"/>
        <dbReference type="ChEBI" id="CHEBI:30616"/>
        <dbReference type="ChEBI" id="CHEBI:78499"/>
        <dbReference type="ChEBI" id="CHEBI:78503"/>
        <dbReference type="ChEBI" id="CHEBI:456216"/>
        <dbReference type="EC" id="2.7.2.17"/>
    </reaction>
</comment>
<comment type="catalytic activity">
    <reaction evidence="1">
        <text>[amino-group carrier protein]-C-terminal-gamma-(L-glutamyl)-L-glutamate + ATP = [amino-group carrier protein]-C-terminal-gamma-(5-phospho-L-glutamyl)-L-glutamate + ADP</text>
        <dbReference type="Rhea" id="RHEA:52632"/>
        <dbReference type="Rhea" id="RHEA-COMP:13311"/>
        <dbReference type="Rhea" id="RHEA-COMP:13313"/>
        <dbReference type="ChEBI" id="CHEBI:30616"/>
        <dbReference type="ChEBI" id="CHEBI:136714"/>
        <dbReference type="ChEBI" id="CHEBI:136717"/>
        <dbReference type="ChEBI" id="CHEBI:456216"/>
        <dbReference type="EC" id="2.7.2.19"/>
    </reaction>
</comment>
<comment type="pathway">
    <text evidence="1">Amino-acid biosynthesis; L-lysine biosynthesis via AAA pathway; L-lysine from L-alpha-aminoadipate (Thermus route): step 2/5.</text>
</comment>
<comment type="pathway">
    <text evidence="1">Amino-acid biosynthesis; L-arginine biosynthesis.</text>
</comment>
<comment type="subcellular location">
    <subcellularLocation>
        <location evidence="1">Cytoplasm</location>
    </subcellularLocation>
</comment>
<comment type="similarity">
    <text evidence="1">Belongs to the acetylglutamate kinase family. LysZ subfamily.</text>
</comment>
<gene>
    <name evidence="1" type="primary">lysZ</name>
    <name type="ordered locus">PF1684</name>
</gene>
<accession>Q8U0B5</accession>
<reference key="1">
    <citation type="journal article" date="1999" name="Genetics">
        <title>Divergence of the hyperthermophilic archaea Pyrococcus furiosus and P. horikoshii inferred from complete genomic sequences.</title>
        <authorList>
            <person name="Maeder D.L."/>
            <person name="Weiss R.B."/>
            <person name="Dunn D.M."/>
            <person name="Cherry J.L."/>
            <person name="Gonzalez J.M."/>
            <person name="DiRuggiero J."/>
            <person name="Robb F.T."/>
        </authorList>
    </citation>
    <scope>NUCLEOTIDE SEQUENCE [LARGE SCALE GENOMIC DNA]</scope>
    <source>
        <strain>ATCC 43587 / DSM 3638 / JCM 8422 / Vc1</strain>
    </source>
</reference>
<name>LYSZ_PYRFU</name>
<protein>
    <recommendedName>
        <fullName evidence="1">Putative [LysW]-aminoadipate/[LysW]-glutamate kinase</fullName>
        <ecNumber evidence="1">2.7.2.17</ecNumber>
        <ecNumber evidence="1">2.7.2.19</ecNumber>
    </recommendedName>
</protein>